<accession>P68179</accession>
<accession>Q42509</accession>
<protein>
    <recommendedName>
        <fullName>Low temperature-induced protein lt101.1</fullName>
    </recommendedName>
    <alternativeName>
        <fullName>Blt101.1</fullName>
        <shortName>Blt101</shortName>
    </alternativeName>
</protein>
<comment type="subcellular location">
    <subcellularLocation>
        <location evidence="3">Membrane</location>
        <topology evidence="3">Multi-pass membrane protein</topology>
    </subcellularLocation>
</comment>
<comment type="tissue specificity">
    <text evidence="2">Expressed in shoot meristems, mature leaves and roots.</text>
</comment>
<comment type="induction">
    <text evidence="2">By cold shock and salt stress, but not by drought or abscisic acid (ABA).</text>
</comment>
<comment type="similarity">
    <text evidence="3">Belongs to the UPF0057 (PMP3) family.</text>
</comment>
<evidence type="ECO:0000255" key="1"/>
<evidence type="ECO:0000269" key="2">
    <source>
    </source>
</evidence>
<evidence type="ECO:0000305" key="3"/>
<reference key="1">
    <citation type="journal article" date="1993" name="Plant Mol. Biol.">
        <title>Molecular analysis and spatial expression pattern of a low-temperature-specific barley gene, blt101.</title>
        <authorList>
            <person name="Goddard N.J."/>
            <person name="Dunn A.M."/>
            <person name="Zhang L."/>
            <person name="White A.J."/>
            <person name="Jack P.L."/>
            <person name="Hughes M.A."/>
        </authorList>
    </citation>
    <scope>NUCLEOTIDE SEQUENCE [MRNA]</scope>
    <scope>INDUCTION</scope>
    <scope>TISSUE SPECIFICITY</scope>
    <source>
        <strain>cv. Igri</strain>
        <tissue>Meristem</tissue>
    </source>
</reference>
<reference key="2">
    <citation type="journal article" date="2001" name="Planta">
        <title>Identification of a novel low-temperature-response element in the promoter of the barley (Hordeum vulgare L) gene blt101.1.</title>
        <authorList>
            <person name="Brown A.P.C."/>
            <person name="Dunn M.A."/>
            <person name="Goddard N.J."/>
            <person name="Hughes M.A."/>
        </authorList>
    </citation>
    <scope>NUCLEOTIDE SEQUENCE</scope>
    <source>
        <strain>cv. Igri</strain>
    </source>
</reference>
<keyword id="KW-0472">Membrane</keyword>
<keyword id="KW-0346">Stress response</keyword>
<keyword id="KW-0812">Transmembrane</keyword>
<keyword id="KW-1133">Transmembrane helix</keyword>
<proteinExistence type="evidence at transcript level"/>
<dbReference type="EMBL" id="Z25537">
    <property type="protein sequence ID" value="CAA80984.1"/>
    <property type="molecule type" value="mRNA"/>
</dbReference>
<dbReference type="EMBL" id="AJ310994">
    <property type="protein sequence ID" value="CAC37081.1"/>
    <property type="molecule type" value="Genomic_DNA"/>
</dbReference>
<dbReference type="PIR" id="S40406">
    <property type="entry name" value="S40406"/>
</dbReference>
<dbReference type="SMR" id="P68179"/>
<dbReference type="ExpressionAtlas" id="P68179">
    <property type="expression patterns" value="baseline and differential"/>
</dbReference>
<dbReference type="GO" id="GO:0016020">
    <property type="term" value="C:membrane"/>
    <property type="evidence" value="ECO:0007669"/>
    <property type="project" value="UniProtKB-SubCell"/>
</dbReference>
<dbReference type="InterPro" id="IPR000612">
    <property type="entry name" value="PMP3"/>
</dbReference>
<dbReference type="PANTHER" id="PTHR21659">
    <property type="entry name" value="HYDROPHOBIC PROTEIN RCI2 LOW TEMPERATURE AND SALT RESPONSIVE PROTEIN LTI6 -RELATED"/>
    <property type="match status" value="1"/>
</dbReference>
<dbReference type="PANTHER" id="PTHR21659:SF117">
    <property type="entry name" value="OS03G0286900 PROTEIN"/>
    <property type="match status" value="1"/>
</dbReference>
<dbReference type="Pfam" id="PF01679">
    <property type="entry name" value="Pmp3"/>
    <property type="match status" value="1"/>
</dbReference>
<dbReference type="PROSITE" id="PS01309">
    <property type="entry name" value="UPF0057"/>
    <property type="match status" value="1"/>
</dbReference>
<name>LT01_HORVU</name>
<organism>
    <name type="scientific">Hordeum vulgare</name>
    <name type="common">Barley</name>
    <dbReference type="NCBI Taxonomy" id="4513"/>
    <lineage>
        <taxon>Eukaryota</taxon>
        <taxon>Viridiplantae</taxon>
        <taxon>Streptophyta</taxon>
        <taxon>Embryophyta</taxon>
        <taxon>Tracheophyta</taxon>
        <taxon>Spermatophyta</taxon>
        <taxon>Magnoliopsida</taxon>
        <taxon>Liliopsida</taxon>
        <taxon>Poales</taxon>
        <taxon>Poaceae</taxon>
        <taxon>BOP clade</taxon>
        <taxon>Pooideae</taxon>
        <taxon>Triticodae</taxon>
        <taxon>Triticeae</taxon>
        <taxon>Hordeinae</taxon>
        <taxon>Hordeum</taxon>
    </lineage>
</organism>
<feature type="chain" id="PRO_0000193978" description="Low temperature-induced protein lt101.1">
    <location>
        <begin position="1"/>
        <end position="54"/>
    </location>
</feature>
<feature type="transmembrane region" description="Helical" evidence="1">
    <location>
        <begin position="2"/>
        <end position="22"/>
    </location>
</feature>
<feature type="transmembrane region" description="Helical" evidence="1">
    <location>
        <begin position="34"/>
        <end position="54"/>
    </location>
</feature>
<gene>
    <name type="primary">LT101.1</name>
    <name type="synonym">LT101</name>
</gene>
<sequence>MGSATVLEVILAIILPPVGVFLRYKLGVEFWICLLLTILGYIPGIIYAVYVLVV</sequence>